<proteinExistence type="inferred from homology"/>
<organism>
    <name type="scientific">Geobacillus kaustophilus (strain HTA426)</name>
    <dbReference type="NCBI Taxonomy" id="235909"/>
    <lineage>
        <taxon>Bacteria</taxon>
        <taxon>Bacillati</taxon>
        <taxon>Bacillota</taxon>
        <taxon>Bacilli</taxon>
        <taxon>Bacillales</taxon>
        <taxon>Anoxybacillaceae</taxon>
        <taxon>Geobacillus</taxon>
        <taxon>Geobacillus thermoleovorans group</taxon>
    </lineage>
</organism>
<feature type="chain" id="PRO_0000095792" description="Translation initiation factor IF-1">
    <location>
        <begin position="1"/>
        <end position="72"/>
    </location>
</feature>
<feature type="domain" description="S1-like" evidence="1">
    <location>
        <begin position="1"/>
        <end position="72"/>
    </location>
</feature>
<feature type="modified residue" description="Phosphotyrosine" evidence="1">
    <location>
        <position position="60"/>
    </location>
</feature>
<keyword id="KW-0963">Cytoplasm</keyword>
<keyword id="KW-0396">Initiation factor</keyword>
<keyword id="KW-0597">Phosphoprotein</keyword>
<keyword id="KW-0648">Protein biosynthesis</keyword>
<keyword id="KW-1185">Reference proteome</keyword>
<keyword id="KW-0694">RNA-binding</keyword>
<keyword id="KW-0699">rRNA-binding</keyword>
<sequence>MAKDDVIEVEGTVIETLPNAMFRVELENGHTVLAHVSGKIRMHFIRILPGDRVTVELSPYDLTRGRITYRYK</sequence>
<gene>
    <name evidence="1" type="primary">infA</name>
    <name type="ordered locus">GK0129</name>
</gene>
<comment type="function">
    <text evidence="1">One of the essential components for the initiation of protein synthesis. Stabilizes the binding of IF-2 and IF-3 on the 30S subunit to which N-formylmethionyl-tRNA(fMet) subsequently binds. Helps modulate mRNA selection, yielding the 30S pre-initiation complex (PIC). Upon addition of the 50S ribosomal subunit IF-1, IF-2 and IF-3 are released leaving the mature 70S translation initiation complex.</text>
</comment>
<comment type="subunit">
    <text evidence="1">Component of the 30S ribosomal translation pre-initiation complex which assembles on the 30S ribosome in the order IF-2 and IF-3, IF-1 and N-formylmethionyl-tRNA(fMet); mRNA recruitment can occur at any time during PIC assembly.</text>
</comment>
<comment type="subcellular location">
    <subcellularLocation>
        <location evidence="1">Cytoplasm</location>
    </subcellularLocation>
</comment>
<comment type="similarity">
    <text evidence="1">Belongs to the IF-1 family.</text>
</comment>
<accession>Q5L3R6</accession>
<name>IF1_GEOKA</name>
<reference key="1">
    <citation type="journal article" date="2004" name="Nucleic Acids Res.">
        <title>Thermoadaptation trait revealed by the genome sequence of thermophilic Geobacillus kaustophilus.</title>
        <authorList>
            <person name="Takami H."/>
            <person name="Takaki Y."/>
            <person name="Chee G.-J."/>
            <person name="Nishi S."/>
            <person name="Shimamura S."/>
            <person name="Suzuki H."/>
            <person name="Matsui S."/>
            <person name="Uchiyama I."/>
        </authorList>
    </citation>
    <scope>NUCLEOTIDE SEQUENCE [LARGE SCALE GENOMIC DNA]</scope>
    <source>
        <strain>HTA426</strain>
    </source>
</reference>
<protein>
    <recommendedName>
        <fullName evidence="1">Translation initiation factor IF-1</fullName>
    </recommendedName>
</protein>
<dbReference type="EMBL" id="BA000043">
    <property type="protein sequence ID" value="BAD74414.1"/>
    <property type="molecule type" value="Genomic_DNA"/>
</dbReference>
<dbReference type="RefSeq" id="WP_011229642.1">
    <property type="nucleotide sequence ID" value="NC_006510.1"/>
</dbReference>
<dbReference type="SMR" id="Q5L3R6"/>
<dbReference type="STRING" id="235909.GK0129"/>
<dbReference type="GeneID" id="89612877"/>
<dbReference type="KEGG" id="gka:GK0129"/>
<dbReference type="eggNOG" id="COG0361">
    <property type="taxonomic scope" value="Bacteria"/>
</dbReference>
<dbReference type="HOGENOM" id="CLU_151267_1_0_9"/>
<dbReference type="Proteomes" id="UP000001172">
    <property type="component" value="Chromosome"/>
</dbReference>
<dbReference type="GO" id="GO:0005829">
    <property type="term" value="C:cytosol"/>
    <property type="evidence" value="ECO:0007669"/>
    <property type="project" value="TreeGrafter"/>
</dbReference>
<dbReference type="GO" id="GO:0043022">
    <property type="term" value="F:ribosome binding"/>
    <property type="evidence" value="ECO:0007669"/>
    <property type="project" value="UniProtKB-UniRule"/>
</dbReference>
<dbReference type="GO" id="GO:0019843">
    <property type="term" value="F:rRNA binding"/>
    <property type="evidence" value="ECO:0007669"/>
    <property type="project" value="UniProtKB-UniRule"/>
</dbReference>
<dbReference type="GO" id="GO:0003743">
    <property type="term" value="F:translation initiation factor activity"/>
    <property type="evidence" value="ECO:0007669"/>
    <property type="project" value="UniProtKB-UniRule"/>
</dbReference>
<dbReference type="CDD" id="cd04451">
    <property type="entry name" value="S1_IF1"/>
    <property type="match status" value="1"/>
</dbReference>
<dbReference type="FunFam" id="2.40.50.140:FF:000002">
    <property type="entry name" value="Translation initiation factor IF-1"/>
    <property type="match status" value="1"/>
</dbReference>
<dbReference type="Gene3D" id="2.40.50.140">
    <property type="entry name" value="Nucleic acid-binding proteins"/>
    <property type="match status" value="1"/>
</dbReference>
<dbReference type="HAMAP" id="MF_00075">
    <property type="entry name" value="IF_1"/>
    <property type="match status" value="1"/>
</dbReference>
<dbReference type="InterPro" id="IPR012340">
    <property type="entry name" value="NA-bd_OB-fold"/>
</dbReference>
<dbReference type="InterPro" id="IPR006196">
    <property type="entry name" value="RNA-binding_domain_S1_IF1"/>
</dbReference>
<dbReference type="InterPro" id="IPR003029">
    <property type="entry name" value="S1_domain"/>
</dbReference>
<dbReference type="InterPro" id="IPR004368">
    <property type="entry name" value="TIF_IF1"/>
</dbReference>
<dbReference type="NCBIfam" id="TIGR00008">
    <property type="entry name" value="infA"/>
    <property type="match status" value="1"/>
</dbReference>
<dbReference type="PANTHER" id="PTHR33370">
    <property type="entry name" value="TRANSLATION INITIATION FACTOR IF-1, CHLOROPLASTIC"/>
    <property type="match status" value="1"/>
</dbReference>
<dbReference type="PANTHER" id="PTHR33370:SF1">
    <property type="entry name" value="TRANSLATION INITIATION FACTOR IF-1, CHLOROPLASTIC"/>
    <property type="match status" value="1"/>
</dbReference>
<dbReference type="Pfam" id="PF01176">
    <property type="entry name" value="eIF-1a"/>
    <property type="match status" value="1"/>
</dbReference>
<dbReference type="SMART" id="SM00316">
    <property type="entry name" value="S1"/>
    <property type="match status" value="1"/>
</dbReference>
<dbReference type="SUPFAM" id="SSF50249">
    <property type="entry name" value="Nucleic acid-binding proteins"/>
    <property type="match status" value="1"/>
</dbReference>
<dbReference type="PROSITE" id="PS50832">
    <property type="entry name" value="S1_IF1_TYPE"/>
    <property type="match status" value="1"/>
</dbReference>
<evidence type="ECO:0000255" key="1">
    <source>
        <dbReference type="HAMAP-Rule" id="MF_00075"/>
    </source>
</evidence>